<sequence length="136" mass="15396">MLQPKRMKFRKMFKGRNRGLANGTEVSFGTFGLKAVGRGRLTARQIESARRAMTRHIKRQGQIWIRVFPDKPITSKPLEVRMGKGKGNVEYWVCQIQPGKVLYEMNGVSEVIAREAFALAAAKLPIKTTFVTKTVM</sequence>
<organism>
    <name type="scientific">Shewanella sp. (strain W3-18-1)</name>
    <dbReference type="NCBI Taxonomy" id="351745"/>
    <lineage>
        <taxon>Bacteria</taxon>
        <taxon>Pseudomonadati</taxon>
        <taxon>Pseudomonadota</taxon>
        <taxon>Gammaproteobacteria</taxon>
        <taxon>Alteromonadales</taxon>
        <taxon>Shewanellaceae</taxon>
        <taxon>Shewanella</taxon>
    </lineage>
</organism>
<gene>
    <name evidence="1" type="primary">rplP</name>
    <name type="ordered locus">Sputw3181_0163</name>
</gene>
<proteinExistence type="inferred from homology"/>
<feature type="chain" id="PRO_1000054708" description="Large ribosomal subunit protein uL16">
    <location>
        <begin position="1"/>
        <end position="136"/>
    </location>
</feature>
<keyword id="KW-0687">Ribonucleoprotein</keyword>
<keyword id="KW-0689">Ribosomal protein</keyword>
<keyword id="KW-0694">RNA-binding</keyword>
<keyword id="KW-0699">rRNA-binding</keyword>
<keyword id="KW-0820">tRNA-binding</keyword>
<accession>A1REC1</accession>
<comment type="function">
    <text evidence="1">Binds 23S rRNA and is also seen to make contacts with the A and possibly P site tRNAs.</text>
</comment>
<comment type="subunit">
    <text evidence="1">Part of the 50S ribosomal subunit.</text>
</comment>
<comment type="similarity">
    <text evidence="1">Belongs to the universal ribosomal protein uL16 family.</text>
</comment>
<dbReference type="EMBL" id="CP000503">
    <property type="protein sequence ID" value="ABM23016.1"/>
    <property type="molecule type" value="Genomic_DNA"/>
</dbReference>
<dbReference type="RefSeq" id="WP_006083593.1">
    <property type="nucleotide sequence ID" value="NC_008750.1"/>
</dbReference>
<dbReference type="SMR" id="A1REC1"/>
<dbReference type="GeneID" id="94726193"/>
<dbReference type="KEGG" id="shw:Sputw3181_0163"/>
<dbReference type="HOGENOM" id="CLU_078858_2_1_6"/>
<dbReference type="Proteomes" id="UP000002597">
    <property type="component" value="Chromosome"/>
</dbReference>
<dbReference type="GO" id="GO:0022625">
    <property type="term" value="C:cytosolic large ribosomal subunit"/>
    <property type="evidence" value="ECO:0007669"/>
    <property type="project" value="TreeGrafter"/>
</dbReference>
<dbReference type="GO" id="GO:0019843">
    <property type="term" value="F:rRNA binding"/>
    <property type="evidence" value="ECO:0007669"/>
    <property type="project" value="UniProtKB-UniRule"/>
</dbReference>
<dbReference type="GO" id="GO:0003735">
    <property type="term" value="F:structural constituent of ribosome"/>
    <property type="evidence" value="ECO:0007669"/>
    <property type="project" value="InterPro"/>
</dbReference>
<dbReference type="GO" id="GO:0000049">
    <property type="term" value="F:tRNA binding"/>
    <property type="evidence" value="ECO:0007669"/>
    <property type="project" value="UniProtKB-KW"/>
</dbReference>
<dbReference type="GO" id="GO:0006412">
    <property type="term" value="P:translation"/>
    <property type="evidence" value="ECO:0007669"/>
    <property type="project" value="UniProtKB-UniRule"/>
</dbReference>
<dbReference type="CDD" id="cd01433">
    <property type="entry name" value="Ribosomal_L16_L10e"/>
    <property type="match status" value="1"/>
</dbReference>
<dbReference type="FunFam" id="3.90.1170.10:FF:000001">
    <property type="entry name" value="50S ribosomal protein L16"/>
    <property type="match status" value="1"/>
</dbReference>
<dbReference type="Gene3D" id="3.90.1170.10">
    <property type="entry name" value="Ribosomal protein L10e/L16"/>
    <property type="match status" value="1"/>
</dbReference>
<dbReference type="HAMAP" id="MF_01342">
    <property type="entry name" value="Ribosomal_uL16"/>
    <property type="match status" value="1"/>
</dbReference>
<dbReference type="InterPro" id="IPR047873">
    <property type="entry name" value="Ribosomal_uL16"/>
</dbReference>
<dbReference type="InterPro" id="IPR000114">
    <property type="entry name" value="Ribosomal_uL16_bact-type"/>
</dbReference>
<dbReference type="InterPro" id="IPR020798">
    <property type="entry name" value="Ribosomal_uL16_CS"/>
</dbReference>
<dbReference type="InterPro" id="IPR016180">
    <property type="entry name" value="Ribosomal_uL16_dom"/>
</dbReference>
<dbReference type="InterPro" id="IPR036920">
    <property type="entry name" value="Ribosomal_uL16_sf"/>
</dbReference>
<dbReference type="NCBIfam" id="TIGR01164">
    <property type="entry name" value="rplP_bact"/>
    <property type="match status" value="1"/>
</dbReference>
<dbReference type="PANTHER" id="PTHR12220">
    <property type="entry name" value="50S/60S RIBOSOMAL PROTEIN L16"/>
    <property type="match status" value="1"/>
</dbReference>
<dbReference type="PANTHER" id="PTHR12220:SF13">
    <property type="entry name" value="LARGE RIBOSOMAL SUBUNIT PROTEIN UL16M"/>
    <property type="match status" value="1"/>
</dbReference>
<dbReference type="Pfam" id="PF00252">
    <property type="entry name" value="Ribosomal_L16"/>
    <property type="match status" value="1"/>
</dbReference>
<dbReference type="PRINTS" id="PR00060">
    <property type="entry name" value="RIBOSOMALL16"/>
</dbReference>
<dbReference type="SUPFAM" id="SSF54686">
    <property type="entry name" value="Ribosomal protein L16p/L10e"/>
    <property type="match status" value="1"/>
</dbReference>
<dbReference type="PROSITE" id="PS00586">
    <property type="entry name" value="RIBOSOMAL_L16_1"/>
    <property type="match status" value="1"/>
</dbReference>
<dbReference type="PROSITE" id="PS00701">
    <property type="entry name" value="RIBOSOMAL_L16_2"/>
    <property type="match status" value="1"/>
</dbReference>
<reference key="1">
    <citation type="submission" date="2006-12" db="EMBL/GenBank/DDBJ databases">
        <title>Complete sequence of Shewanella sp. W3-18-1.</title>
        <authorList>
            <consortium name="US DOE Joint Genome Institute"/>
            <person name="Copeland A."/>
            <person name="Lucas S."/>
            <person name="Lapidus A."/>
            <person name="Barry K."/>
            <person name="Detter J.C."/>
            <person name="Glavina del Rio T."/>
            <person name="Hammon N."/>
            <person name="Israni S."/>
            <person name="Dalin E."/>
            <person name="Tice H."/>
            <person name="Pitluck S."/>
            <person name="Chain P."/>
            <person name="Malfatti S."/>
            <person name="Shin M."/>
            <person name="Vergez L."/>
            <person name="Schmutz J."/>
            <person name="Larimer F."/>
            <person name="Land M."/>
            <person name="Hauser L."/>
            <person name="Kyrpides N."/>
            <person name="Lykidis A."/>
            <person name="Tiedje J."/>
            <person name="Richardson P."/>
        </authorList>
    </citation>
    <scope>NUCLEOTIDE SEQUENCE [LARGE SCALE GENOMIC DNA]</scope>
    <source>
        <strain>W3-18-1</strain>
    </source>
</reference>
<protein>
    <recommendedName>
        <fullName evidence="1">Large ribosomal subunit protein uL16</fullName>
    </recommendedName>
    <alternativeName>
        <fullName evidence="2">50S ribosomal protein L16</fullName>
    </alternativeName>
</protein>
<evidence type="ECO:0000255" key="1">
    <source>
        <dbReference type="HAMAP-Rule" id="MF_01342"/>
    </source>
</evidence>
<evidence type="ECO:0000305" key="2"/>
<name>RL16_SHESW</name>